<feature type="chain" id="PRO_0000315825" description="Myotubularin-related protein 12">
    <location>
        <begin position="1"/>
        <end position="747"/>
    </location>
</feature>
<feature type="domain" description="Myotubularin phosphatase" evidence="3">
    <location>
        <begin position="205"/>
        <end position="643"/>
    </location>
</feature>
<feature type="region of interest" description="Interaction with MTM1" evidence="5">
    <location>
        <begin position="449"/>
        <end position="558"/>
    </location>
</feature>
<feature type="modified residue" description="Phosphoserine" evidence="11">
    <location>
        <position position="564"/>
    </location>
</feature>
<feature type="modified residue" description="Phosphoserine" evidence="1">
    <location>
        <position position="601"/>
    </location>
</feature>
<feature type="modified residue" description="Phosphoserine" evidence="11">
    <location>
        <position position="716"/>
    </location>
</feature>
<feature type="splice variant" id="VSP_030721" description="In isoform 3." evidence="7">
    <location>
        <begin position="449"/>
        <end position="558"/>
    </location>
</feature>
<feature type="splice variant" id="VSP_030722" description="In isoform 2." evidence="8">
    <location>
        <begin position="505"/>
        <end position="558"/>
    </location>
</feature>
<feature type="sequence conflict" description="In Ref. 3; BAA91195." evidence="9" ref="3">
    <original>D</original>
    <variation>V</variation>
    <location>
        <position position="197"/>
    </location>
</feature>
<feature type="sequence conflict" description="In Ref. 1; AAK26171." evidence="9" ref="1">
    <original>L</original>
    <variation>M</variation>
    <location>
        <position position="591"/>
    </location>
</feature>
<organism>
    <name type="scientific">Homo sapiens</name>
    <name type="common">Human</name>
    <dbReference type="NCBI Taxonomy" id="9606"/>
    <lineage>
        <taxon>Eukaryota</taxon>
        <taxon>Metazoa</taxon>
        <taxon>Chordata</taxon>
        <taxon>Craniata</taxon>
        <taxon>Vertebrata</taxon>
        <taxon>Euteleostomi</taxon>
        <taxon>Mammalia</taxon>
        <taxon>Eutheria</taxon>
        <taxon>Euarchontoglires</taxon>
        <taxon>Primates</taxon>
        <taxon>Haplorrhini</taxon>
        <taxon>Catarrhini</taxon>
        <taxon>Hominidae</taxon>
        <taxon>Homo</taxon>
    </lineage>
</organism>
<accession>Q9C0I1</accession>
<accession>Q69YJ4</accession>
<accession>Q6PFW3</accession>
<accession>Q96QU2</accession>
<accession>Q9NX27</accession>
<protein>
    <recommendedName>
        <fullName>Myotubularin-related protein 12</fullName>
    </recommendedName>
    <alternativeName>
        <fullName evidence="9">Inactive phosphatidylinositol 3-phosphatase 12</fullName>
    </alternativeName>
    <alternativeName>
        <fullName>Phosphatidylinositol 3 phosphate 3-phosphatase adapter subunit</fullName>
        <shortName>3-PAP</shortName>
        <shortName>3-phosphatase adapter protein</shortName>
    </alternativeName>
</protein>
<name>MTMRC_HUMAN</name>
<keyword id="KW-0025">Alternative splicing</keyword>
<keyword id="KW-0963">Cytoplasm</keyword>
<keyword id="KW-0597">Phosphoprotein</keyword>
<keyword id="KW-1267">Proteomics identification</keyword>
<keyword id="KW-1185">Reference proteome</keyword>
<keyword id="KW-0703">Sarcoplasmic reticulum</keyword>
<dbReference type="EMBL" id="AY028703">
    <property type="protein sequence ID" value="AAK26171.1"/>
    <property type="molecule type" value="mRNA"/>
</dbReference>
<dbReference type="EMBL" id="AB051469">
    <property type="protein sequence ID" value="BAB21773.1"/>
    <property type="status" value="ALT_INIT"/>
    <property type="molecule type" value="mRNA"/>
</dbReference>
<dbReference type="EMBL" id="AK000483">
    <property type="protein sequence ID" value="BAA91195.1"/>
    <property type="molecule type" value="mRNA"/>
</dbReference>
<dbReference type="EMBL" id="BC057393">
    <property type="protein sequence ID" value="AAH57393.1"/>
    <property type="molecule type" value="mRNA"/>
</dbReference>
<dbReference type="EMBL" id="AL833231">
    <property type="protein sequence ID" value="CAH10604.1"/>
    <property type="molecule type" value="mRNA"/>
</dbReference>
<dbReference type="CCDS" id="CCDS34138.1">
    <molecule id="Q9C0I1-1"/>
</dbReference>
<dbReference type="CCDS" id="CCDS75230.1">
    <molecule id="Q9C0I1-3"/>
</dbReference>
<dbReference type="CCDS" id="CCDS77998.1">
    <molecule id="Q9C0I1-2"/>
</dbReference>
<dbReference type="RefSeq" id="NP_001035536.1">
    <molecule id="Q9C0I1-1"/>
    <property type="nucleotide sequence ID" value="NM_001040446.3"/>
</dbReference>
<dbReference type="RefSeq" id="NP_001281272.1">
    <molecule id="Q9C0I1-2"/>
    <property type="nucleotide sequence ID" value="NM_001294343.2"/>
</dbReference>
<dbReference type="RefSeq" id="NP_001281273.1">
    <molecule id="Q9C0I1-3"/>
    <property type="nucleotide sequence ID" value="NM_001294344.2"/>
</dbReference>
<dbReference type="SMR" id="Q9C0I1"/>
<dbReference type="BioGRID" id="120032">
    <property type="interactions" value="47"/>
</dbReference>
<dbReference type="FunCoup" id="Q9C0I1">
    <property type="interactions" value="2401"/>
</dbReference>
<dbReference type="IntAct" id="Q9C0I1">
    <property type="interactions" value="20"/>
</dbReference>
<dbReference type="MINT" id="Q9C0I1"/>
<dbReference type="STRING" id="9606.ENSP00000371577"/>
<dbReference type="DEPOD" id="MTMR12"/>
<dbReference type="GlyGen" id="Q9C0I1">
    <property type="glycosylation" value="2 sites, 1 N-linked glycan (1 site)"/>
</dbReference>
<dbReference type="iPTMnet" id="Q9C0I1"/>
<dbReference type="PhosphoSitePlus" id="Q9C0I1"/>
<dbReference type="BioMuta" id="MTMR12"/>
<dbReference type="DMDM" id="166199459"/>
<dbReference type="jPOST" id="Q9C0I1"/>
<dbReference type="MassIVE" id="Q9C0I1"/>
<dbReference type="PaxDb" id="9606-ENSP00000371577"/>
<dbReference type="PeptideAtlas" id="Q9C0I1"/>
<dbReference type="ProteomicsDB" id="80050">
    <molecule id="Q9C0I1-1"/>
</dbReference>
<dbReference type="ProteomicsDB" id="80051">
    <molecule id="Q9C0I1-2"/>
</dbReference>
<dbReference type="ProteomicsDB" id="80052">
    <molecule id="Q9C0I1-3"/>
</dbReference>
<dbReference type="Pumba" id="Q9C0I1"/>
<dbReference type="Antibodypedia" id="9766">
    <property type="antibodies" value="102 antibodies from 21 providers"/>
</dbReference>
<dbReference type="DNASU" id="54545"/>
<dbReference type="Ensembl" id="ENST00000264934.5">
    <molecule id="Q9C0I1-3"/>
    <property type="protein sequence ID" value="ENSP00000264934.5"/>
    <property type="gene ID" value="ENSG00000150712.11"/>
</dbReference>
<dbReference type="Ensembl" id="ENST00000280285.9">
    <molecule id="Q9C0I1-2"/>
    <property type="protein sequence ID" value="ENSP00000280285.5"/>
    <property type="gene ID" value="ENSG00000150712.11"/>
</dbReference>
<dbReference type="Ensembl" id="ENST00000382142.8">
    <molecule id="Q9C0I1-1"/>
    <property type="protein sequence ID" value="ENSP00000371577.3"/>
    <property type="gene ID" value="ENSG00000150712.11"/>
</dbReference>
<dbReference type="GeneID" id="54545"/>
<dbReference type="KEGG" id="hsa:54545"/>
<dbReference type="MANE-Select" id="ENST00000382142.8">
    <property type="protein sequence ID" value="ENSP00000371577.3"/>
    <property type="RefSeq nucleotide sequence ID" value="NM_001040446.3"/>
    <property type="RefSeq protein sequence ID" value="NP_001035536.1"/>
</dbReference>
<dbReference type="UCSC" id="uc003jhq.4">
    <molecule id="Q9C0I1-1"/>
    <property type="organism name" value="human"/>
</dbReference>
<dbReference type="AGR" id="HGNC:18191"/>
<dbReference type="CTD" id="54545"/>
<dbReference type="DisGeNET" id="54545"/>
<dbReference type="GeneCards" id="MTMR12"/>
<dbReference type="HGNC" id="HGNC:18191">
    <property type="gene designation" value="MTMR12"/>
</dbReference>
<dbReference type="HPA" id="ENSG00000150712">
    <property type="expression patterns" value="Low tissue specificity"/>
</dbReference>
<dbReference type="MIM" id="606501">
    <property type="type" value="gene"/>
</dbReference>
<dbReference type="neXtProt" id="NX_Q9C0I1"/>
<dbReference type="OpenTargets" id="ENSG00000150712"/>
<dbReference type="PharmGKB" id="PA128394670"/>
<dbReference type="VEuPathDB" id="HostDB:ENSG00000150712"/>
<dbReference type="eggNOG" id="KOG1089">
    <property type="taxonomic scope" value="Eukaryota"/>
</dbReference>
<dbReference type="GeneTree" id="ENSGT00940000160263"/>
<dbReference type="HOGENOM" id="CLU_021912_2_0_1"/>
<dbReference type="InParanoid" id="Q9C0I1"/>
<dbReference type="OMA" id="DVLRFQG"/>
<dbReference type="OrthoDB" id="271628at2759"/>
<dbReference type="PAN-GO" id="Q9C0I1">
    <property type="GO annotations" value="4 GO annotations based on evolutionary models"/>
</dbReference>
<dbReference type="PhylomeDB" id="Q9C0I1"/>
<dbReference type="TreeFam" id="TF315197"/>
<dbReference type="BRENDA" id="3.1.3.64">
    <property type="organism ID" value="2681"/>
</dbReference>
<dbReference type="PathwayCommons" id="Q9C0I1"/>
<dbReference type="Reactome" id="R-HSA-1660516">
    <property type="pathway name" value="Synthesis of PIPs at the early endosome membrane"/>
</dbReference>
<dbReference type="SignaLink" id="Q9C0I1"/>
<dbReference type="BioGRID-ORCS" id="54545">
    <property type="hits" value="8 hits in 1169 CRISPR screens"/>
</dbReference>
<dbReference type="ChiTaRS" id="MTMR12">
    <property type="organism name" value="human"/>
</dbReference>
<dbReference type="GenomeRNAi" id="54545"/>
<dbReference type="Pharos" id="Q9C0I1">
    <property type="development level" value="Tbio"/>
</dbReference>
<dbReference type="PRO" id="PR:Q9C0I1"/>
<dbReference type="Proteomes" id="UP000005640">
    <property type="component" value="Chromosome 5"/>
</dbReference>
<dbReference type="RNAct" id="Q9C0I1">
    <property type="molecule type" value="protein"/>
</dbReference>
<dbReference type="Bgee" id="ENSG00000150712">
    <property type="expression patterns" value="Expressed in germinal epithelium of ovary and 187 other cell types or tissues"/>
</dbReference>
<dbReference type="ExpressionAtlas" id="Q9C0I1">
    <property type="expression patterns" value="baseline and differential"/>
</dbReference>
<dbReference type="GO" id="GO:0005737">
    <property type="term" value="C:cytoplasm"/>
    <property type="evidence" value="ECO:0000314"/>
    <property type="project" value="UniProtKB"/>
</dbReference>
<dbReference type="GO" id="GO:0005829">
    <property type="term" value="C:cytosol"/>
    <property type="evidence" value="ECO:0000304"/>
    <property type="project" value="Reactome"/>
</dbReference>
<dbReference type="GO" id="GO:0016020">
    <property type="term" value="C:membrane"/>
    <property type="evidence" value="ECO:0000318"/>
    <property type="project" value="GO_Central"/>
</dbReference>
<dbReference type="GO" id="GO:0030017">
    <property type="term" value="C:sarcomere"/>
    <property type="evidence" value="ECO:0007669"/>
    <property type="project" value="UniProtKB-SubCell"/>
</dbReference>
<dbReference type="GO" id="GO:0016529">
    <property type="term" value="C:sarcoplasmic reticulum"/>
    <property type="evidence" value="ECO:0007669"/>
    <property type="project" value="UniProtKB-SubCell"/>
</dbReference>
<dbReference type="GO" id="GO:0004438">
    <property type="term" value="F:phosphatidylinositol-3-phosphate phosphatase activity"/>
    <property type="evidence" value="ECO:0000318"/>
    <property type="project" value="GO_Central"/>
</dbReference>
<dbReference type="GO" id="GO:0046856">
    <property type="term" value="P:phosphatidylinositol dephosphorylation"/>
    <property type="evidence" value="ECO:0000318"/>
    <property type="project" value="GO_Central"/>
</dbReference>
<dbReference type="CDD" id="cd14594">
    <property type="entry name" value="PTP-MTMR12"/>
    <property type="match status" value="1"/>
</dbReference>
<dbReference type="FunFam" id="2.30.29.30:FF:000188">
    <property type="entry name" value="Myotubularin related protein 12"/>
    <property type="match status" value="1"/>
</dbReference>
<dbReference type="Gene3D" id="2.30.29.30">
    <property type="entry name" value="Pleckstrin-homology domain (PH domain)/Phosphotyrosine-binding domain (PTB)"/>
    <property type="match status" value="1"/>
</dbReference>
<dbReference type="InterPro" id="IPR022587">
    <property type="entry name" value="MTMR12-like_C"/>
</dbReference>
<dbReference type="InterPro" id="IPR030576">
    <property type="entry name" value="MTMR12_PTP"/>
</dbReference>
<dbReference type="InterPro" id="IPR030564">
    <property type="entry name" value="Myotubularin"/>
</dbReference>
<dbReference type="InterPro" id="IPR010569">
    <property type="entry name" value="Myotubularin-like_Pase_dom"/>
</dbReference>
<dbReference type="InterPro" id="IPR011993">
    <property type="entry name" value="PH-like_dom_sf"/>
</dbReference>
<dbReference type="InterPro" id="IPR029021">
    <property type="entry name" value="Prot-tyrosine_phosphatase-like"/>
</dbReference>
<dbReference type="PANTHER" id="PTHR10807">
    <property type="entry name" value="MYOTUBULARIN-RELATED"/>
    <property type="match status" value="1"/>
</dbReference>
<dbReference type="PANTHER" id="PTHR10807:SF37">
    <property type="entry name" value="MYOTUBULARIN-RELATED PROTEIN 12"/>
    <property type="match status" value="1"/>
</dbReference>
<dbReference type="Pfam" id="PF12578">
    <property type="entry name" value="3-PAP"/>
    <property type="match status" value="1"/>
</dbReference>
<dbReference type="Pfam" id="PF06602">
    <property type="entry name" value="Myotub-related"/>
    <property type="match status" value="1"/>
</dbReference>
<dbReference type="SUPFAM" id="SSF52799">
    <property type="entry name" value="(Phosphotyrosine protein) phosphatases II"/>
    <property type="match status" value="1"/>
</dbReference>
<dbReference type="SUPFAM" id="SSF50729">
    <property type="entry name" value="PH domain-like"/>
    <property type="match status" value="1"/>
</dbReference>
<dbReference type="PROSITE" id="PS51339">
    <property type="entry name" value="PPASE_MYOTUBULARIN"/>
    <property type="match status" value="1"/>
</dbReference>
<sequence length="747" mass="86148">MLGKGVVGGGGGTKAPKPSFVSYVRPEEIHTNEKEVTEKEVTLHLLPGEQLLCEASTVLKYVQEDSCQHGVYGRLVCTDFKIAFLGDDESALDNDETQFKNKVIGENDITLHCVDQIYGVFDEKKKTLFGQLKKYPEKLIIHCKDLRVFQFCLRYTKEEEVKRIVSGIIHHTQAPKLLKRLFLFSYATAAQNNTVTDPKNHTVMFDTLKDWCWELERTKGNMKYKAVSVNEGYKVCERLPAYFVVPTPLPEENVQRFQGHGIPIWCWSCHNGSALLKMSALPKEQDDGILQIQKSFLDGIYKTIHRPPYEIVKTEDLSSNFLSLQEIQTAYSKFKQLFLIDNSTEFWDTDIKWFSLLESSSWLDIIRRCLKKAIEITECMEAQNMNVLLLEENASDLCCLISSLVQLMMDPHCRTRIGFQSLIQKEWVMGGHCFLDRCNHLRQNDKEEVPVFLLFLDCVWQLVHQHPPAFEFTETYLTVLSDSLYIPIFSTFFFNSPHQKDTNMGREGQDTQSKPLNLLTVWDWSVQFEPKAQTLLKNPLYVEKPKLDKGQRKGMRFKHQRQLSLPLTQSKSSPKRGFFREETDHLIKNLLGKRISKLINSSDELQDNFREFYDSWHSKSTDYHGLLLPHIEGPEIKVWAQRYLRWIPEAQILGGGQVATLSKLLEMMEEVQSLQEKIDERHHSQQAPQAEAPCLLRNSARLSSLFPFALLQRHSSKPVLPTSGWKALGDEDDLAKREDEFVDLGDV</sequence>
<evidence type="ECO:0000250" key="1">
    <source>
        <dbReference type="UniProtKB" id="Q5FVM6"/>
    </source>
</evidence>
<evidence type="ECO:0000250" key="2">
    <source>
        <dbReference type="UniProtKB" id="Q80TA6"/>
    </source>
</evidence>
<evidence type="ECO:0000255" key="3">
    <source>
        <dbReference type="PROSITE-ProRule" id="PRU00669"/>
    </source>
</evidence>
<evidence type="ECO:0000269" key="4">
    <source>
    </source>
</evidence>
<evidence type="ECO:0000269" key="5">
    <source>
    </source>
</evidence>
<evidence type="ECO:0000269" key="6">
    <source>
    </source>
</evidence>
<evidence type="ECO:0000303" key="7">
    <source>
    </source>
</evidence>
<evidence type="ECO:0000303" key="8">
    <source>
    </source>
</evidence>
<evidence type="ECO:0000305" key="9"/>
<evidence type="ECO:0000305" key="10">
    <source>
    </source>
</evidence>
<evidence type="ECO:0007744" key="11">
    <source>
    </source>
</evidence>
<reference key="1">
    <citation type="journal article" date="2001" name="Proc. Natl. Acad. Sci. U.S.A.">
        <title>Characterization of an adapter subunit to a phosphatidylinositol (3)P 3-phosphatase: identification of a myotubularin-related protein lacking catalytic activity.</title>
        <authorList>
            <person name="Nandurkar H.H."/>
            <person name="Caldwell K.K."/>
            <person name="Whisstock J.C."/>
            <person name="Layton M.J."/>
            <person name="Gaudet E.A."/>
            <person name="Norris F.A."/>
            <person name="Majerus P.W."/>
            <person name="Mitchell C.A."/>
        </authorList>
    </citation>
    <scope>NUCLEOTIDE SEQUENCE [MRNA] (ISOFORM 1)</scope>
    <scope>FUNCTION</scope>
    <scope>LACK OF CATALYTIC ACTIVITY</scope>
    <scope>TISSUE SPECIFICITY</scope>
</reference>
<reference key="2">
    <citation type="journal article" date="2000" name="DNA Res.">
        <title>Prediction of the coding sequences of unidentified human genes. XIX. The complete sequences of 100 new cDNA clones from brain which code for large proteins in vitro.</title>
        <authorList>
            <person name="Nagase T."/>
            <person name="Kikuno R."/>
            <person name="Hattori A."/>
            <person name="Kondo Y."/>
            <person name="Okumura K."/>
            <person name="Ohara O."/>
        </authorList>
    </citation>
    <scope>NUCLEOTIDE SEQUENCE [LARGE SCALE MRNA] (ISOFORM 1)</scope>
</reference>
<reference key="3">
    <citation type="journal article" date="2004" name="Nat. Genet.">
        <title>Complete sequencing and characterization of 21,243 full-length human cDNAs.</title>
        <authorList>
            <person name="Ota T."/>
            <person name="Suzuki Y."/>
            <person name="Nishikawa T."/>
            <person name="Otsuki T."/>
            <person name="Sugiyama T."/>
            <person name="Irie R."/>
            <person name="Wakamatsu A."/>
            <person name="Hayashi K."/>
            <person name="Sato H."/>
            <person name="Nagai K."/>
            <person name="Kimura K."/>
            <person name="Makita H."/>
            <person name="Sekine M."/>
            <person name="Obayashi M."/>
            <person name="Nishi T."/>
            <person name="Shibahara T."/>
            <person name="Tanaka T."/>
            <person name="Ishii S."/>
            <person name="Yamamoto J."/>
            <person name="Saito K."/>
            <person name="Kawai Y."/>
            <person name="Isono Y."/>
            <person name="Nakamura Y."/>
            <person name="Nagahari K."/>
            <person name="Murakami K."/>
            <person name="Yasuda T."/>
            <person name="Iwayanagi T."/>
            <person name="Wagatsuma M."/>
            <person name="Shiratori A."/>
            <person name="Sudo H."/>
            <person name="Hosoiri T."/>
            <person name="Kaku Y."/>
            <person name="Kodaira H."/>
            <person name="Kondo H."/>
            <person name="Sugawara M."/>
            <person name="Takahashi M."/>
            <person name="Kanda K."/>
            <person name="Yokoi T."/>
            <person name="Furuya T."/>
            <person name="Kikkawa E."/>
            <person name="Omura Y."/>
            <person name="Abe K."/>
            <person name="Kamihara K."/>
            <person name="Katsuta N."/>
            <person name="Sato K."/>
            <person name="Tanikawa M."/>
            <person name="Yamazaki M."/>
            <person name="Ninomiya K."/>
            <person name="Ishibashi T."/>
            <person name="Yamashita H."/>
            <person name="Murakawa K."/>
            <person name="Fujimori K."/>
            <person name="Tanai H."/>
            <person name="Kimata M."/>
            <person name="Watanabe M."/>
            <person name="Hiraoka S."/>
            <person name="Chiba Y."/>
            <person name="Ishida S."/>
            <person name="Ono Y."/>
            <person name="Takiguchi S."/>
            <person name="Watanabe S."/>
            <person name="Yosida M."/>
            <person name="Hotuta T."/>
            <person name="Kusano J."/>
            <person name="Kanehori K."/>
            <person name="Takahashi-Fujii A."/>
            <person name="Hara H."/>
            <person name="Tanase T.-O."/>
            <person name="Nomura Y."/>
            <person name="Togiya S."/>
            <person name="Komai F."/>
            <person name="Hara R."/>
            <person name="Takeuchi K."/>
            <person name="Arita M."/>
            <person name="Imose N."/>
            <person name="Musashino K."/>
            <person name="Yuuki H."/>
            <person name="Oshima A."/>
            <person name="Sasaki N."/>
            <person name="Aotsuka S."/>
            <person name="Yoshikawa Y."/>
            <person name="Matsunawa H."/>
            <person name="Ichihara T."/>
            <person name="Shiohata N."/>
            <person name="Sano S."/>
            <person name="Moriya S."/>
            <person name="Momiyama H."/>
            <person name="Satoh N."/>
            <person name="Takami S."/>
            <person name="Terashima Y."/>
            <person name="Suzuki O."/>
            <person name="Nakagawa S."/>
            <person name="Senoh A."/>
            <person name="Mizoguchi H."/>
            <person name="Goto Y."/>
            <person name="Shimizu F."/>
            <person name="Wakebe H."/>
            <person name="Hishigaki H."/>
            <person name="Watanabe T."/>
            <person name="Sugiyama A."/>
            <person name="Takemoto M."/>
            <person name="Kawakami B."/>
            <person name="Yamazaki M."/>
            <person name="Watanabe K."/>
            <person name="Kumagai A."/>
            <person name="Itakura S."/>
            <person name="Fukuzumi Y."/>
            <person name="Fujimori Y."/>
            <person name="Komiyama M."/>
            <person name="Tashiro H."/>
            <person name="Tanigami A."/>
            <person name="Fujiwara T."/>
            <person name="Ono T."/>
            <person name="Yamada K."/>
            <person name="Fujii Y."/>
            <person name="Ozaki K."/>
            <person name="Hirao M."/>
            <person name="Ohmori Y."/>
            <person name="Kawabata A."/>
            <person name="Hikiji T."/>
            <person name="Kobatake N."/>
            <person name="Inagaki H."/>
            <person name="Ikema Y."/>
            <person name="Okamoto S."/>
            <person name="Okitani R."/>
            <person name="Kawakami T."/>
            <person name="Noguchi S."/>
            <person name="Itoh T."/>
            <person name="Shigeta K."/>
            <person name="Senba T."/>
            <person name="Matsumura K."/>
            <person name="Nakajima Y."/>
            <person name="Mizuno T."/>
            <person name="Morinaga M."/>
            <person name="Sasaki M."/>
            <person name="Togashi T."/>
            <person name="Oyama M."/>
            <person name="Hata H."/>
            <person name="Watanabe M."/>
            <person name="Komatsu T."/>
            <person name="Mizushima-Sugano J."/>
            <person name="Satoh T."/>
            <person name="Shirai Y."/>
            <person name="Takahashi Y."/>
            <person name="Nakagawa K."/>
            <person name="Okumura K."/>
            <person name="Nagase T."/>
            <person name="Nomura N."/>
            <person name="Kikuchi H."/>
            <person name="Masuho Y."/>
            <person name="Yamashita R."/>
            <person name="Nakai K."/>
            <person name="Yada T."/>
            <person name="Nakamura Y."/>
            <person name="Ohara O."/>
            <person name="Isogai T."/>
            <person name="Sugano S."/>
        </authorList>
    </citation>
    <scope>NUCLEOTIDE SEQUENCE [LARGE SCALE MRNA] (ISOFORM 3)</scope>
</reference>
<reference key="4">
    <citation type="journal article" date="2004" name="Genome Res.">
        <title>The status, quality, and expansion of the NIH full-length cDNA project: the Mammalian Gene Collection (MGC).</title>
        <authorList>
            <consortium name="The MGC Project Team"/>
        </authorList>
    </citation>
    <scope>NUCLEOTIDE SEQUENCE [LARGE SCALE MRNA] (ISOFORM 2)</scope>
</reference>
<reference key="5">
    <citation type="journal article" date="2007" name="BMC Genomics">
        <title>The full-ORF clone resource of the German cDNA consortium.</title>
        <authorList>
            <person name="Bechtel S."/>
            <person name="Rosenfelder H."/>
            <person name="Duda A."/>
            <person name="Schmidt C.P."/>
            <person name="Ernst U."/>
            <person name="Wellenreuther R."/>
            <person name="Mehrle A."/>
            <person name="Schuster C."/>
            <person name="Bahr A."/>
            <person name="Bloecker H."/>
            <person name="Heubner D."/>
            <person name="Hoerlein A."/>
            <person name="Michel G."/>
            <person name="Wedler H."/>
            <person name="Koehrer K."/>
            <person name="Ottenwaelder B."/>
            <person name="Poustka A."/>
            <person name="Wiemann S."/>
            <person name="Schupp I."/>
        </authorList>
    </citation>
    <scope>NUCLEOTIDE SEQUENCE [LARGE SCALE MRNA] OF 354-747 (ISOFORM 1)</scope>
    <source>
        <tissue>Melanoma</tissue>
    </source>
</reference>
<reference key="6">
    <citation type="journal article" date="2003" name="Proc. Natl. Acad. Sci. U.S.A.">
        <title>Identification of myotubularin as the lipid phosphatase catalytic subunit associated with the 3-phosphatase adapter protein, 3-PAP.</title>
        <authorList>
            <person name="Nandurkar H.H."/>
            <person name="Layton M."/>
            <person name="Laporte J."/>
            <person name="Selan C."/>
            <person name="Corcoran L."/>
            <person name="Caldwell K.K."/>
            <person name="Mochizuki Y."/>
            <person name="Majerus P.W."/>
            <person name="Mitchell C.A."/>
        </authorList>
    </citation>
    <scope>FUNCTION</scope>
    <scope>IDENTIFICATION IN A COMPLEX WITH MTM1</scope>
    <scope>IDENTIFICATION IN A COMPLEX WITH MTMR2</scope>
    <scope>SUBCELLULAR LOCATION</scope>
    <scope>REGION</scope>
</reference>
<reference key="7">
    <citation type="journal article" date="2013" name="J. Proteome Res.">
        <title>Toward a comprehensive characterization of a human cancer cell phosphoproteome.</title>
        <authorList>
            <person name="Zhou H."/>
            <person name="Di Palma S."/>
            <person name="Preisinger C."/>
            <person name="Peng M."/>
            <person name="Polat A.N."/>
            <person name="Heck A.J."/>
            <person name="Mohammed S."/>
        </authorList>
    </citation>
    <scope>PHOSPHORYLATION [LARGE SCALE ANALYSIS] AT SER-564 AND SER-716</scope>
    <scope>IDENTIFICATION BY MASS SPECTROMETRY [LARGE SCALE ANALYSIS]</scope>
    <source>
        <tissue>Cervix carcinoma</tissue>
        <tissue>Erythroleukemia</tissue>
    </source>
</reference>
<reference key="8">
    <citation type="journal article" date="2013" name="PLoS Genet.">
        <title>Loss of catalytically inactive lipid phosphatase myotubularin-related protein 12 impairs myotubularin stability and promotes centronuclear myopathy in zebrafish.</title>
        <authorList>
            <person name="Gupta V.A."/>
            <person name="Hnia K."/>
            <person name="Smith L.L."/>
            <person name="Gundry S.R."/>
            <person name="McIntire J.E."/>
            <person name="Shimazu J."/>
            <person name="Bass J.R."/>
            <person name="Talbot E.A."/>
            <person name="Amoasii L."/>
            <person name="Goldman N.E."/>
            <person name="Laporte J."/>
            <person name="Beggs A.H."/>
        </authorList>
    </citation>
    <scope>FUNCTION</scope>
    <scope>INTERACTION WITH MTM1</scope>
    <scope>TISSUE SPECIFICITY</scope>
</reference>
<reference key="9">
    <citation type="journal article" date="2014" name="J. Proteomics">
        <title>An enzyme assisted RP-RPLC approach for in-depth analysis of human liver phosphoproteome.</title>
        <authorList>
            <person name="Bian Y."/>
            <person name="Song C."/>
            <person name="Cheng K."/>
            <person name="Dong M."/>
            <person name="Wang F."/>
            <person name="Huang J."/>
            <person name="Sun D."/>
            <person name="Wang L."/>
            <person name="Ye M."/>
            <person name="Zou H."/>
        </authorList>
    </citation>
    <scope>IDENTIFICATION BY MASS SPECTROMETRY [LARGE SCALE ANALYSIS]</scope>
    <source>
        <tissue>Liver</tissue>
    </source>
</reference>
<proteinExistence type="evidence at protein level"/>
<comment type="function">
    <text evidence="2 4 5 6">Acts as an adapter for the myotubularin-related phosphatases (PubMed:11504939, PubMed:12847286, PubMed:23818870). Regulates phosphatase MTM1 protein stability and possibly its intracellular location (PubMed:23818870). By stabilizing MTM1 protein levels, required for skeletal muscle maintenance but not for myogenesis (By similarity).</text>
</comment>
<comment type="subunit">
    <text evidence="5 6">Heterodimer with lipid phosphatase MTM1 (PubMed:12847286, PubMed:23818870). Heterodimer with lipid phosphatase MTMR2 (PubMed:12847286).</text>
</comment>
<comment type="interaction">
    <interactant intactId="EBI-2829520">
        <id>Q9C0I1</id>
    </interactant>
    <interactant intactId="EBI-2864109">
        <id>Q13496</id>
        <label>MTM1</label>
    </interactant>
    <organismsDiffer>false</organismsDiffer>
    <experiments>4</experiments>
</comment>
<comment type="interaction">
    <interactant intactId="EBI-2829520">
        <id>Q9C0I1</id>
    </interactant>
    <interactant intactId="EBI-475631">
        <id>Q13614</id>
        <label>MTMR2</label>
    </interactant>
    <organismsDiffer>false</organismsDiffer>
    <experiments>3</experiments>
</comment>
<comment type="subcellular location">
    <subcellularLocation>
        <location evidence="5">Cytoplasm</location>
    </subcellularLocation>
    <subcellularLocation>
        <location evidence="2">Sarcoplasmic reticulum</location>
    </subcellularLocation>
    <subcellularLocation>
        <location evidence="2">Cytoplasm</location>
        <location evidence="2">Myofibril</location>
        <location evidence="2">Sarcomere</location>
    </subcellularLocation>
    <text evidence="2 5">Localizes to punctate vesicles when associated with MTM1 (PubMed:12847286). Localizes to triads, a structure formed by a T tubule and two sarcoplasmic reticulum terminal cisterna (By similarity). In skeletal muscles, co-localizes with MTM1 in the sarcomere (By similarity). Partially localizes to the sarcoplasmic reticulum in skeletal muscles (By similarity).</text>
</comment>
<comment type="alternative products">
    <event type="alternative splicing"/>
    <isoform>
        <id>Q9C0I1-1</id>
        <name>1</name>
        <sequence type="displayed"/>
    </isoform>
    <isoform>
        <id>Q9C0I1-2</id>
        <name>2</name>
        <sequence type="described" ref="VSP_030722"/>
    </isoform>
    <isoform>
        <id>Q9C0I1-3</id>
        <name>3</name>
        <sequence type="described" ref="VSP_030721"/>
    </isoform>
</comment>
<comment type="tissue specificity">
    <text evidence="4 6">Expressed in skeletal muscles (at protein level) (PubMed:23818870). Ubiquitous with prominent expression in brain, heart, kidney, placenta, and lung (PubMed:11504939).</text>
</comment>
<comment type="similarity">
    <text evidence="9">Belongs to the protein-tyrosine phosphatase family. Non-receptor class myotubularin subfamily.</text>
</comment>
<comment type="caution">
    <text evidence="10">Although it belongs to the non-receptor class myotubularin subfamily, lacks the conserved active site cysteine residue at position 391 in the dsPTPase catalytic loop and does not have phosphatase activity.</text>
</comment>
<comment type="sequence caution" evidence="9">
    <conflict type="erroneous initiation">
        <sequence resource="EMBL-CDS" id="BAB21773"/>
    </conflict>
</comment>
<gene>
    <name type="primary">MTMR12</name>
    <name type="synonym">KIAA1682</name>
    <name type="synonym">PIP3AP</name>
</gene>